<organism>
    <name type="scientific">Neisseria meningitidis serogroup B / serotype 15 (strain H44/76)</name>
    <dbReference type="NCBI Taxonomy" id="909420"/>
    <lineage>
        <taxon>Bacteria</taxon>
        <taxon>Pseudomonadati</taxon>
        <taxon>Pseudomonadota</taxon>
        <taxon>Betaproteobacteria</taxon>
        <taxon>Neisseriales</taxon>
        <taxon>Neisseriaceae</taxon>
        <taxon>Neisseria</taxon>
    </lineage>
</organism>
<feature type="chain" id="PRO_0000452685" description="Elongation factor P">
    <location>
        <begin position="1"/>
        <end position="186"/>
    </location>
</feature>
<feature type="glycosylation site" description="N-alpha-linked (Rha) arginine" evidence="3">
    <location>
        <position position="32"/>
    </location>
</feature>
<feature type="helix" evidence="6">
    <location>
        <begin position="4"/>
        <end position="6"/>
    </location>
</feature>
<feature type="strand" evidence="6">
    <location>
        <begin position="11"/>
        <end position="15"/>
    </location>
</feature>
<feature type="strand" evidence="6">
    <location>
        <begin position="18"/>
        <end position="29"/>
    </location>
</feature>
<feature type="strand" evidence="6">
    <location>
        <begin position="35"/>
        <end position="43"/>
    </location>
</feature>
<feature type="turn" evidence="6">
    <location>
        <begin position="44"/>
        <end position="46"/>
    </location>
</feature>
<feature type="strand" evidence="6">
    <location>
        <begin position="49"/>
        <end position="55"/>
    </location>
</feature>
<keyword id="KW-0002">3D-structure</keyword>
<keyword id="KW-0963">Cytoplasm</keyword>
<keyword id="KW-0251">Elongation factor</keyword>
<keyword id="KW-0325">Glycoprotein</keyword>
<keyword id="KW-0648">Protein biosynthesis</keyword>
<proteinExistence type="evidence at protein level"/>
<protein>
    <recommendedName>
        <fullName evidence="2">Elongation factor P</fullName>
        <shortName evidence="2">EF-P</shortName>
    </recommendedName>
</protein>
<dbReference type="EMBL" id="AEQZ01000013">
    <property type="protein sequence ID" value="EFV64285.1"/>
    <property type="molecule type" value="Genomic_DNA"/>
</dbReference>
<dbReference type="RefSeq" id="WP_002219406.1">
    <property type="nucleotide sequence ID" value="NZ_AEQZ01000013.1"/>
</dbReference>
<dbReference type="PDB" id="5WXK">
    <property type="method" value="X-ray"/>
    <property type="resolution" value="1.80 A"/>
    <property type="chains" value="B=1-63"/>
</dbReference>
<dbReference type="PDBsum" id="5WXK"/>
<dbReference type="SMR" id="E6MVW0"/>
<dbReference type="GlyCosmos" id="E6MVW0">
    <property type="glycosylation" value="1 site, No reported glycans"/>
</dbReference>
<dbReference type="GeneID" id="86928945"/>
<dbReference type="KEGG" id="nmh:NMBH4476_1234"/>
<dbReference type="PATRIC" id="fig|909420.3.peg.1693"/>
<dbReference type="UniPathway" id="UPA00345"/>
<dbReference type="Proteomes" id="UP000032707">
    <property type="component" value="Unassembled WGS sequence"/>
</dbReference>
<dbReference type="GO" id="GO:0005737">
    <property type="term" value="C:cytoplasm"/>
    <property type="evidence" value="ECO:0007669"/>
    <property type="project" value="UniProtKB-SubCell"/>
</dbReference>
<dbReference type="GO" id="GO:0003746">
    <property type="term" value="F:translation elongation factor activity"/>
    <property type="evidence" value="ECO:0007669"/>
    <property type="project" value="UniProtKB-UniRule"/>
</dbReference>
<dbReference type="GO" id="GO:0043043">
    <property type="term" value="P:peptide biosynthetic process"/>
    <property type="evidence" value="ECO:0007669"/>
    <property type="project" value="InterPro"/>
</dbReference>
<dbReference type="CDD" id="cd04470">
    <property type="entry name" value="S1_EF-P_repeat_1"/>
    <property type="match status" value="1"/>
</dbReference>
<dbReference type="CDD" id="cd05794">
    <property type="entry name" value="S1_EF-P_repeat_2"/>
    <property type="match status" value="1"/>
</dbReference>
<dbReference type="FunFam" id="2.30.30.30:FF:000003">
    <property type="entry name" value="Elongation factor P"/>
    <property type="match status" value="1"/>
</dbReference>
<dbReference type="FunFam" id="2.40.50.140:FF:000004">
    <property type="entry name" value="Elongation factor P"/>
    <property type="match status" value="1"/>
</dbReference>
<dbReference type="FunFam" id="2.40.50.140:FF:000009">
    <property type="entry name" value="Elongation factor P"/>
    <property type="match status" value="1"/>
</dbReference>
<dbReference type="Gene3D" id="2.30.30.30">
    <property type="match status" value="1"/>
</dbReference>
<dbReference type="Gene3D" id="2.40.50.140">
    <property type="entry name" value="Nucleic acid-binding proteins"/>
    <property type="match status" value="2"/>
</dbReference>
<dbReference type="HAMAP" id="MF_00141">
    <property type="entry name" value="EF_P"/>
    <property type="match status" value="1"/>
</dbReference>
<dbReference type="InterPro" id="IPR015365">
    <property type="entry name" value="Elong-fact-P_C"/>
</dbReference>
<dbReference type="InterPro" id="IPR012340">
    <property type="entry name" value="NA-bd_OB-fold"/>
</dbReference>
<dbReference type="InterPro" id="IPR014722">
    <property type="entry name" value="Rib_uL2_dom2"/>
</dbReference>
<dbReference type="InterPro" id="IPR020599">
    <property type="entry name" value="Transl_elong_fac_P/YeiP"/>
</dbReference>
<dbReference type="InterPro" id="IPR013185">
    <property type="entry name" value="Transl_elong_KOW-like"/>
</dbReference>
<dbReference type="InterPro" id="IPR001059">
    <property type="entry name" value="Transl_elong_P/YeiP_cen"/>
</dbReference>
<dbReference type="InterPro" id="IPR011768">
    <property type="entry name" value="Transl_elongation_fac_P"/>
</dbReference>
<dbReference type="InterPro" id="IPR008991">
    <property type="entry name" value="Translation_prot_SH3-like_sf"/>
</dbReference>
<dbReference type="NCBIfam" id="TIGR00038">
    <property type="entry name" value="efp"/>
    <property type="match status" value="1"/>
</dbReference>
<dbReference type="NCBIfam" id="NF001810">
    <property type="entry name" value="PRK00529.1"/>
    <property type="match status" value="1"/>
</dbReference>
<dbReference type="PANTHER" id="PTHR30053">
    <property type="entry name" value="ELONGATION FACTOR P"/>
    <property type="match status" value="1"/>
</dbReference>
<dbReference type="PANTHER" id="PTHR30053:SF12">
    <property type="entry name" value="ELONGATION FACTOR P (EF-P) FAMILY PROTEIN"/>
    <property type="match status" value="1"/>
</dbReference>
<dbReference type="Pfam" id="PF01132">
    <property type="entry name" value="EFP"/>
    <property type="match status" value="1"/>
</dbReference>
<dbReference type="Pfam" id="PF08207">
    <property type="entry name" value="EFP_N"/>
    <property type="match status" value="1"/>
</dbReference>
<dbReference type="Pfam" id="PF09285">
    <property type="entry name" value="Elong-fact-P_C"/>
    <property type="match status" value="1"/>
</dbReference>
<dbReference type="PIRSF" id="PIRSF005901">
    <property type="entry name" value="EF-P"/>
    <property type="match status" value="1"/>
</dbReference>
<dbReference type="SMART" id="SM01185">
    <property type="entry name" value="EFP"/>
    <property type="match status" value="1"/>
</dbReference>
<dbReference type="SMART" id="SM00841">
    <property type="entry name" value="Elong-fact-P_C"/>
    <property type="match status" value="1"/>
</dbReference>
<dbReference type="SUPFAM" id="SSF50249">
    <property type="entry name" value="Nucleic acid-binding proteins"/>
    <property type="match status" value="2"/>
</dbReference>
<dbReference type="SUPFAM" id="SSF50104">
    <property type="entry name" value="Translation proteins SH3-like domain"/>
    <property type="match status" value="1"/>
</dbReference>
<gene>
    <name evidence="2" type="primary">efp</name>
    <name evidence="4" type="ORF">NMH_0798</name>
</gene>
<evidence type="ECO:0000250" key="1">
    <source>
        <dbReference type="UniProtKB" id="P0DUK0"/>
    </source>
</evidence>
<evidence type="ECO:0000255" key="2">
    <source>
        <dbReference type="HAMAP-Rule" id="MF_00141"/>
    </source>
</evidence>
<evidence type="ECO:0000269" key="3">
    <source>
    </source>
</evidence>
<evidence type="ECO:0000312" key="4">
    <source>
        <dbReference type="EMBL" id="EFV64285.1"/>
    </source>
</evidence>
<evidence type="ECO:0007744" key="5">
    <source>
        <dbReference type="PDB" id="5WXK"/>
    </source>
</evidence>
<evidence type="ECO:0007829" key="6">
    <source>
        <dbReference type="PDB" id="5WXK"/>
    </source>
</evidence>
<sequence length="186" mass="20880">MKTAQELRAGNVFMVGNDPMVVQKTEYIKGGRSSAKVSMKLKNLLTGAASETIYKADDKFDVVILSRKNCTYSYFADPMYVFMDEEFNQYEIEADNIGDALKFIVDGMEDQCEVTFYEGNPISVELPTIIVREVEYTEPAVKGDTSGKVMKTARLVGGTEIQVMSYIENGDKVEIDTRTGEFRKRA</sequence>
<name>EFP_NEIMH</name>
<accession>E6MVW0</accession>
<comment type="function">
    <text evidence="2">Involved in peptide bond synthesis. Stimulates efficient translation and peptide-bond synthesis on native or reconstituted 70S ribosomes in vitro. Probably functions indirectly by altering the affinity of the ribosome for aminoacyl-tRNA, thus increasing their reactivity as acceptors for peptidyl transferase.</text>
</comment>
<comment type="pathway">
    <text evidence="2">Protein biosynthesis; polypeptide chain elongation.</text>
</comment>
<comment type="subcellular location">
    <subcellularLocation>
        <location evidence="2">Cytoplasm</location>
    </subcellularLocation>
</comment>
<comment type="PTM">
    <text evidence="1">Glycosylated ar Arg-32 by EarP: arginine rhamnosylation is required for EF-P function and rescue of polyproline stalled ribosomes.</text>
</comment>
<comment type="similarity">
    <text evidence="2">Belongs to the elongation factor P family.</text>
</comment>
<reference key="1">
    <citation type="journal article" date="2011" name="J. Bacteriol.">
        <title>Genome sequence of Neisseria meningitidis serogroup B strain H44/76.</title>
        <authorList>
            <person name="Piet J.R."/>
            <person name="Huis In 't Veld R.A."/>
            <person name="van Schaik B.D."/>
            <person name="van Kampen A.H."/>
            <person name="Baas F."/>
            <person name="van de Beek D."/>
            <person name="Pannekoek Y."/>
            <person name="van der Ende A."/>
        </authorList>
    </citation>
    <scope>NUCLEOTIDE SEQUENCE [LARGE SCALE GENOMIC DNA]</scope>
    <source>
        <strain>H44/76</strain>
    </source>
</reference>
<reference evidence="5" key="2">
    <citation type="journal article" date="2018" name="Nat. Chem. Biol.">
        <title>Structural basis of protein arginine rhamnosylation by glycosyltransferase EarP.</title>
        <authorList>
            <person name="Sengoku T."/>
            <person name="Suzuki T."/>
            <person name="Dohmae N."/>
            <person name="Watanabe C."/>
            <person name="Honma T."/>
            <person name="Hikida Y."/>
            <person name="Yamaguchi Y."/>
            <person name="Takahashi H."/>
            <person name="Yokoyama S."/>
            <person name="Yanagisawa T."/>
        </authorList>
    </citation>
    <scope>X-RAY CRYSTALLOGRAPHY (1.80 ANGSTROMS) OF 1-63 IN COMPLEX WITH EARP</scope>
    <scope>GLYCOSYLATION AT ARG-32</scope>
    <source>
        <strain>H44/76</strain>
    </source>
</reference>